<comment type="function">
    <text evidence="1">Catalyzes the NAD-dependent oxidation of glycerol to dihydroxyacetone (glycerone). Allows microorganisms to utilize glycerol as a source of carbon under anaerobic conditions.</text>
</comment>
<comment type="catalytic activity">
    <reaction evidence="1">
        <text>glycerol + NAD(+) = dihydroxyacetone + NADH + H(+)</text>
        <dbReference type="Rhea" id="RHEA:13769"/>
        <dbReference type="ChEBI" id="CHEBI:15378"/>
        <dbReference type="ChEBI" id="CHEBI:16016"/>
        <dbReference type="ChEBI" id="CHEBI:17754"/>
        <dbReference type="ChEBI" id="CHEBI:57540"/>
        <dbReference type="ChEBI" id="CHEBI:57945"/>
        <dbReference type="EC" id="1.1.1.6"/>
    </reaction>
</comment>
<comment type="cofactor">
    <cofactor evidence="1">
        <name>Zn(2+)</name>
        <dbReference type="ChEBI" id="CHEBI:29105"/>
    </cofactor>
    <text evidence="1">Binds 1 zinc ion per subunit.</text>
</comment>
<comment type="pathway">
    <text>Polyol metabolism; glycerol fermentation; glycerone phosphate from glycerol (oxidative route): step 1/2.</text>
</comment>
<comment type="similarity">
    <text evidence="3">Belongs to the iron-containing alcohol dehydrogenase family.</text>
</comment>
<geneLocation type="plasmid">
    <name>pHMT112</name>
</geneLocation>
<reference key="1">
    <citation type="journal article" date="1996" name="J. Bacteriol.">
        <title>Characterization and expression of the plasmid-borne bedD gene from Pseudomonas putida ML2, which codes for a NAD+-dependent cis-benzene dihydrodiol dehydrogenase.</title>
        <authorList>
            <person name="Fong K.P.Y."/>
            <person name="Goh C.B.H."/>
            <person name="Tan H.M."/>
        </authorList>
    </citation>
    <scope>NUCLEOTIDE SEQUENCE [GENOMIC DNA]</scope>
    <source>
        <strain>ML2</strain>
    </source>
</reference>
<feature type="chain" id="PRO_0000087830" description="Glycerol dehydrogenase">
    <location>
        <begin position="1"/>
        <end position="365"/>
    </location>
</feature>
<feature type="binding site" evidence="2">
    <location>
        <position position="37"/>
    </location>
    <ligand>
        <name>NAD(+)</name>
        <dbReference type="ChEBI" id="CHEBI:57540"/>
    </ligand>
</feature>
<feature type="binding site" evidence="2">
    <location>
        <position position="94"/>
    </location>
    <ligand>
        <name>NAD(+)</name>
        <dbReference type="ChEBI" id="CHEBI:57540"/>
    </ligand>
</feature>
<feature type="binding site" evidence="2">
    <location>
        <position position="95"/>
    </location>
    <ligand>
        <name>NAD(+)</name>
        <dbReference type="ChEBI" id="CHEBI:57540"/>
    </ligand>
</feature>
<feature type="binding site" evidence="2">
    <location>
        <position position="116"/>
    </location>
    <ligand>
        <name>NAD(+)</name>
        <dbReference type="ChEBI" id="CHEBI:57540"/>
    </ligand>
</feature>
<feature type="binding site" evidence="2">
    <location>
        <position position="119"/>
    </location>
    <ligand>
        <name>NAD(+)</name>
        <dbReference type="ChEBI" id="CHEBI:57540"/>
    </ligand>
</feature>
<feature type="binding site" evidence="1">
    <location>
        <position position="121"/>
    </location>
    <ligand>
        <name>glycerol</name>
        <dbReference type="ChEBI" id="CHEBI:17754"/>
    </ligand>
</feature>
<feature type="binding site" evidence="2">
    <location>
        <position position="125"/>
    </location>
    <ligand>
        <name>NAD(+)</name>
        <dbReference type="ChEBI" id="CHEBI:57540"/>
    </ligand>
</feature>
<feature type="binding site" evidence="2">
    <location>
        <position position="127"/>
    </location>
    <ligand>
        <name>NAD(+)</name>
        <dbReference type="ChEBI" id="CHEBI:57540"/>
    </ligand>
</feature>
<feature type="binding site" evidence="2">
    <location>
        <position position="131"/>
    </location>
    <ligand>
        <name>NAD(+)</name>
        <dbReference type="ChEBI" id="CHEBI:57540"/>
    </ligand>
</feature>
<feature type="binding site" evidence="1">
    <location>
        <position position="171"/>
    </location>
    <ligand>
        <name>Zn(2+)</name>
        <dbReference type="ChEBI" id="CHEBI:29105"/>
        <note>catalytic</note>
    </ligand>
</feature>
<feature type="binding site" evidence="1">
    <location>
        <position position="254"/>
    </location>
    <ligand>
        <name>glycerol</name>
        <dbReference type="ChEBI" id="CHEBI:17754"/>
    </ligand>
</feature>
<feature type="binding site" evidence="1">
    <location>
        <position position="254"/>
    </location>
    <ligand>
        <name>Zn(2+)</name>
        <dbReference type="ChEBI" id="CHEBI:29105"/>
        <note>catalytic</note>
    </ligand>
</feature>
<feature type="binding site" evidence="1">
    <location>
        <position position="271"/>
    </location>
    <ligand>
        <name>Zn(2+)</name>
        <dbReference type="ChEBI" id="CHEBI:29105"/>
        <note>catalytic</note>
    </ligand>
</feature>
<keyword id="KW-0319">Glycerol metabolism</keyword>
<keyword id="KW-0479">Metal-binding</keyword>
<keyword id="KW-0520">NAD</keyword>
<keyword id="KW-0560">Oxidoreductase</keyword>
<keyword id="KW-0614">Plasmid</keyword>
<keyword id="KW-0862">Zinc</keyword>
<protein>
    <recommendedName>
        <fullName evidence="1">Glycerol dehydrogenase</fullName>
        <shortName evidence="1">GDH</shortName>
        <shortName evidence="1">GLDH</shortName>
        <ecNumber evidence="1">1.1.1.6</ecNumber>
    </recommendedName>
</protein>
<name>GLDA_PSEPU</name>
<dbReference type="EC" id="1.1.1.6" evidence="1"/>
<dbReference type="EMBL" id="AF148496">
    <property type="protein sequence ID" value="AAC44426.1"/>
    <property type="molecule type" value="Genomic_DNA"/>
</dbReference>
<dbReference type="SMR" id="P50173"/>
<dbReference type="UniPathway" id="UPA00617">
    <property type="reaction ID" value="UER00668"/>
</dbReference>
<dbReference type="GO" id="GO:0005829">
    <property type="term" value="C:cytosol"/>
    <property type="evidence" value="ECO:0007669"/>
    <property type="project" value="TreeGrafter"/>
</dbReference>
<dbReference type="GO" id="GO:0008888">
    <property type="term" value="F:glycerol dehydrogenase (NAD+) activity"/>
    <property type="evidence" value="ECO:0007669"/>
    <property type="project" value="UniProtKB-EC"/>
</dbReference>
<dbReference type="GO" id="GO:0046872">
    <property type="term" value="F:metal ion binding"/>
    <property type="evidence" value="ECO:0007669"/>
    <property type="project" value="UniProtKB-KW"/>
</dbReference>
<dbReference type="GO" id="GO:0019588">
    <property type="term" value="P:anaerobic glycerol catabolic process"/>
    <property type="evidence" value="ECO:0007669"/>
    <property type="project" value="UniProtKB-UniPathway"/>
</dbReference>
<dbReference type="CDD" id="cd08170">
    <property type="entry name" value="GlyDH"/>
    <property type="match status" value="1"/>
</dbReference>
<dbReference type="FunFam" id="1.20.1090.10:FF:000004">
    <property type="entry name" value="Glycerol dehydrogenase"/>
    <property type="match status" value="1"/>
</dbReference>
<dbReference type="FunFam" id="3.40.50.1970:FF:000005">
    <property type="entry name" value="Glycerol dehydrogenase"/>
    <property type="match status" value="1"/>
</dbReference>
<dbReference type="Gene3D" id="3.40.50.1970">
    <property type="match status" value="1"/>
</dbReference>
<dbReference type="Gene3D" id="1.20.1090.10">
    <property type="entry name" value="Dehydroquinate synthase-like - alpha domain"/>
    <property type="match status" value="1"/>
</dbReference>
<dbReference type="InterPro" id="IPR001670">
    <property type="entry name" value="ADH_Fe/GldA"/>
</dbReference>
<dbReference type="InterPro" id="IPR018211">
    <property type="entry name" value="ADH_Fe_CS"/>
</dbReference>
<dbReference type="InterPro" id="IPR016205">
    <property type="entry name" value="Glycerol_DH"/>
</dbReference>
<dbReference type="NCBIfam" id="NF006941">
    <property type="entry name" value="PRK09423.1"/>
    <property type="match status" value="1"/>
</dbReference>
<dbReference type="PANTHER" id="PTHR43616">
    <property type="entry name" value="GLYCEROL DEHYDROGENASE"/>
    <property type="match status" value="1"/>
</dbReference>
<dbReference type="PANTHER" id="PTHR43616:SF5">
    <property type="entry name" value="GLYCEROL DEHYDROGENASE 1"/>
    <property type="match status" value="1"/>
</dbReference>
<dbReference type="Pfam" id="PF00465">
    <property type="entry name" value="Fe-ADH"/>
    <property type="match status" value="1"/>
</dbReference>
<dbReference type="PIRSF" id="PIRSF000112">
    <property type="entry name" value="Glycerol_dehydrogenase"/>
    <property type="match status" value="1"/>
</dbReference>
<dbReference type="SUPFAM" id="SSF56796">
    <property type="entry name" value="Dehydroquinate synthase-like"/>
    <property type="match status" value="1"/>
</dbReference>
<dbReference type="PROSITE" id="PS00913">
    <property type="entry name" value="ADH_IRON_1"/>
    <property type="match status" value="1"/>
</dbReference>
<dbReference type="PROSITE" id="PS00060">
    <property type="entry name" value="ADH_IRON_2"/>
    <property type="match status" value="1"/>
</dbReference>
<proteinExistence type="inferred from homology"/>
<evidence type="ECO:0000250" key="1">
    <source>
        <dbReference type="UniProtKB" id="P0A9S5"/>
    </source>
</evidence>
<evidence type="ECO:0000250" key="2">
    <source>
        <dbReference type="UniProtKB" id="P32816"/>
    </source>
</evidence>
<evidence type="ECO:0000305" key="3"/>
<organism>
    <name type="scientific">Pseudomonas putida</name>
    <name type="common">Arthrobacter siderocapsulatus</name>
    <dbReference type="NCBI Taxonomy" id="303"/>
    <lineage>
        <taxon>Bacteria</taxon>
        <taxon>Pseudomonadati</taxon>
        <taxon>Pseudomonadota</taxon>
        <taxon>Gammaproteobacteria</taxon>
        <taxon>Pseudomonadales</taxon>
        <taxon>Pseudomonadaceae</taxon>
        <taxon>Pseudomonas</taxon>
    </lineage>
</organism>
<accession>P50173</accession>
<gene>
    <name type="primary">gldA</name>
    <name type="synonym">bedD</name>
</gene>
<sequence length="365" mass="38316">MDRAIQSPGKYVQGADALQRLGDYLKPLADSWLVIADKFVLGFAEDTIRQSLSKAGLAMDIVAFNGECSQGEVDRLCQLATQNGRSAIVGIGGGKTLDTAKAVAFFQKVPVAVAPTIASTDAPCSALSVLYTDEGEFDRYLMLPTNPALVVVDTAIVARAPARLLAAGIGDALATWFEARAASRSSAATMAGGPATQTALNLARFCYDTLLEEGEKAMLAVQAQVVTPALERIVEANTYLSGVGFESGGVAAAHAVHNGLTAVAETHHFYHGEKVAFGVLVQLALENASNAEMQEVMSLCHAVGLPITLAQLDITEDIPTKMRAVAELACAPGETIHNMPGGVTVEQVYGALLVADQLGQHFLEF</sequence>